<protein>
    <recommendedName>
        <fullName evidence="1">Large ribosomal subunit protein bL36</fullName>
    </recommendedName>
    <alternativeName>
        <fullName evidence="2">50S ribosomal protein L36</fullName>
    </alternativeName>
</protein>
<keyword id="KW-0687">Ribonucleoprotein</keyword>
<keyword id="KW-0689">Ribosomal protein</keyword>
<dbReference type="EMBL" id="CP000848">
    <property type="protein sequence ID" value="ABV76383.1"/>
    <property type="molecule type" value="Genomic_DNA"/>
</dbReference>
<dbReference type="SMR" id="A8GSK8"/>
<dbReference type="KEGG" id="rri:A1G_04395"/>
<dbReference type="HOGENOM" id="CLU_135723_3_2_5"/>
<dbReference type="Proteomes" id="UP000006832">
    <property type="component" value="Chromosome"/>
</dbReference>
<dbReference type="GO" id="GO:1990904">
    <property type="term" value="C:ribonucleoprotein complex"/>
    <property type="evidence" value="ECO:0007669"/>
    <property type="project" value="UniProtKB-KW"/>
</dbReference>
<dbReference type="GO" id="GO:0005840">
    <property type="term" value="C:ribosome"/>
    <property type="evidence" value="ECO:0007669"/>
    <property type="project" value="UniProtKB-KW"/>
</dbReference>
<dbReference type="GO" id="GO:0003735">
    <property type="term" value="F:structural constituent of ribosome"/>
    <property type="evidence" value="ECO:0007669"/>
    <property type="project" value="InterPro"/>
</dbReference>
<dbReference type="GO" id="GO:0006412">
    <property type="term" value="P:translation"/>
    <property type="evidence" value="ECO:0007669"/>
    <property type="project" value="UniProtKB-UniRule"/>
</dbReference>
<dbReference type="HAMAP" id="MF_00251">
    <property type="entry name" value="Ribosomal_bL36"/>
    <property type="match status" value="1"/>
</dbReference>
<dbReference type="InterPro" id="IPR000473">
    <property type="entry name" value="Ribosomal_bL36"/>
</dbReference>
<dbReference type="InterPro" id="IPR035977">
    <property type="entry name" value="Ribosomal_bL36_sp"/>
</dbReference>
<dbReference type="InterPro" id="IPR047621">
    <property type="entry name" value="Ribosomal_L36_bact"/>
</dbReference>
<dbReference type="NCBIfam" id="NF002021">
    <property type="entry name" value="PRK00831.1"/>
    <property type="match status" value="1"/>
</dbReference>
<dbReference type="PANTHER" id="PTHR47781">
    <property type="entry name" value="50S RIBOSOMAL PROTEIN L36 2"/>
    <property type="match status" value="1"/>
</dbReference>
<dbReference type="PANTHER" id="PTHR47781:SF1">
    <property type="entry name" value="LARGE RIBOSOMAL SUBUNIT PROTEIN BL36B"/>
    <property type="match status" value="1"/>
</dbReference>
<dbReference type="Pfam" id="PF00444">
    <property type="entry name" value="Ribosomal_L36"/>
    <property type="match status" value="1"/>
</dbReference>
<dbReference type="SUPFAM" id="SSF57840">
    <property type="entry name" value="Ribosomal protein L36"/>
    <property type="match status" value="1"/>
</dbReference>
<dbReference type="PROSITE" id="PS00828">
    <property type="entry name" value="RIBOSOMAL_L36"/>
    <property type="match status" value="1"/>
</dbReference>
<name>RL36_RICRS</name>
<sequence>MKVVSSLKSLKKRDKDCQIVKRRGKIFVINKKNKRFKAKQG</sequence>
<evidence type="ECO:0000255" key="1">
    <source>
        <dbReference type="HAMAP-Rule" id="MF_00251"/>
    </source>
</evidence>
<evidence type="ECO:0000305" key="2"/>
<reference key="1">
    <citation type="submission" date="2007-09" db="EMBL/GenBank/DDBJ databases">
        <title>Complete genome sequence of Rickettsia rickettsii.</title>
        <authorList>
            <person name="Madan A."/>
            <person name="Fahey J."/>
            <person name="Helton E."/>
            <person name="Ketteman M."/>
            <person name="Madan A."/>
            <person name="Rodrigues S."/>
            <person name="Sanchez A."/>
            <person name="Dasch G."/>
            <person name="Eremeeva M."/>
        </authorList>
    </citation>
    <scope>NUCLEOTIDE SEQUENCE [LARGE SCALE GENOMIC DNA]</scope>
    <source>
        <strain>Sheila Smith</strain>
    </source>
</reference>
<feature type="chain" id="PRO_1000003412" description="Large ribosomal subunit protein bL36">
    <location>
        <begin position="1"/>
        <end position="41"/>
    </location>
</feature>
<proteinExistence type="inferred from homology"/>
<organism>
    <name type="scientific">Rickettsia rickettsii (strain Sheila Smith)</name>
    <dbReference type="NCBI Taxonomy" id="392021"/>
    <lineage>
        <taxon>Bacteria</taxon>
        <taxon>Pseudomonadati</taxon>
        <taxon>Pseudomonadota</taxon>
        <taxon>Alphaproteobacteria</taxon>
        <taxon>Rickettsiales</taxon>
        <taxon>Rickettsiaceae</taxon>
        <taxon>Rickettsieae</taxon>
        <taxon>Rickettsia</taxon>
        <taxon>spotted fever group</taxon>
    </lineage>
</organism>
<accession>A8GSK8</accession>
<gene>
    <name evidence="1" type="primary">rpmJ</name>
    <name type="ordered locus">A1G_04395</name>
</gene>
<comment type="similarity">
    <text evidence="1">Belongs to the bacterial ribosomal protein bL36 family.</text>
</comment>